<proteinExistence type="inferred from homology"/>
<accession>C1FLX0</accession>
<evidence type="ECO:0000255" key="1">
    <source>
        <dbReference type="HAMAP-Rule" id="MF_01445"/>
    </source>
</evidence>
<feature type="chain" id="PRO_1000184957" description="tRNA N6-adenosine threonylcarbamoyltransferase">
    <location>
        <begin position="1"/>
        <end position="340"/>
    </location>
</feature>
<feature type="binding site" evidence="1">
    <location>
        <position position="115"/>
    </location>
    <ligand>
        <name>Fe cation</name>
        <dbReference type="ChEBI" id="CHEBI:24875"/>
    </ligand>
</feature>
<feature type="binding site" evidence="1">
    <location>
        <position position="119"/>
    </location>
    <ligand>
        <name>Fe cation</name>
        <dbReference type="ChEBI" id="CHEBI:24875"/>
    </ligand>
</feature>
<feature type="binding site" evidence="1">
    <location>
        <begin position="138"/>
        <end position="142"/>
    </location>
    <ligand>
        <name>substrate</name>
    </ligand>
</feature>
<feature type="binding site" evidence="1">
    <location>
        <position position="171"/>
    </location>
    <ligand>
        <name>substrate</name>
    </ligand>
</feature>
<feature type="binding site" evidence="1">
    <location>
        <position position="184"/>
    </location>
    <ligand>
        <name>substrate</name>
    </ligand>
</feature>
<feature type="binding site" evidence="1">
    <location>
        <position position="188"/>
    </location>
    <ligand>
        <name>substrate</name>
    </ligand>
</feature>
<feature type="binding site" evidence="1">
    <location>
        <position position="278"/>
    </location>
    <ligand>
        <name>substrate</name>
    </ligand>
</feature>
<feature type="binding site" evidence="1">
    <location>
        <position position="306"/>
    </location>
    <ligand>
        <name>Fe cation</name>
        <dbReference type="ChEBI" id="CHEBI:24875"/>
    </ligand>
</feature>
<organism>
    <name type="scientific">Clostridium botulinum (strain Kyoto / Type A2)</name>
    <dbReference type="NCBI Taxonomy" id="536232"/>
    <lineage>
        <taxon>Bacteria</taxon>
        <taxon>Bacillati</taxon>
        <taxon>Bacillota</taxon>
        <taxon>Clostridia</taxon>
        <taxon>Eubacteriales</taxon>
        <taxon>Clostridiaceae</taxon>
        <taxon>Clostridium</taxon>
    </lineage>
</organism>
<reference key="1">
    <citation type="submission" date="2008-10" db="EMBL/GenBank/DDBJ databases">
        <title>Genome sequence of Clostridium botulinum A2 Kyoto.</title>
        <authorList>
            <person name="Shrivastava S."/>
            <person name="Brinkac L.M."/>
            <person name="Brown J.L."/>
            <person name="Bruce D."/>
            <person name="Detter C.C."/>
            <person name="Johnson E.A."/>
            <person name="Munk C.A."/>
            <person name="Smith L.A."/>
            <person name="Smith T.J."/>
            <person name="Sutton G."/>
            <person name="Brettin T.S."/>
        </authorList>
    </citation>
    <scope>NUCLEOTIDE SEQUENCE [LARGE SCALE GENOMIC DNA]</scope>
    <source>
        <strain>Kyoto / Type A2</strain>
    </source>
</reference>
<keyword id="KW-0012">Acyltransferase</keyword>
<keyword id="KW-0963">Cytoplasm</keyword>
<keyword id="KW-0408">Iron</keyword>
<keyword id="KW-0479">Metal-binding</keyword>
<keyword id="KW-0808">Transferase</keyword>
<keyword id="KW-0819">tRNA processing</keyword>
<name>TSAD_CLOBJ</name>
<comment type="function">
    <text evidence="1">Required for the formation of a threonylcarbamoyl group on adenosine at position 37 (t(6)A37) in tRNAs that read codons beginning with adenine. Is involved in the transfer of the threonylcarbamoyl moiety of threonylcarbamoyl-AMP (TC-AMP) to the N6 group of A37, together with TsaE and TsaB. TsaD likely plays a direct catalytic role in this reaction.</text>
</comment>
<comment type="catalytic activity">
    <reaction evidence="1">
        <text>L-threonylcarbamoyladenylate + adenosine(37) in tRNA = N(6)-L-threonylcarbamoyladenosine(37) in tRNA + AMP + H(+)</text>
        <dbReference type="Rhea" id="RHEA:37059"/>
        <dbReference type="Rhea" id="RHEA-COMP:10162"/>
        <dbReference type="Rhea" id="RHEA-COMP:10163"/>
        <dbReference type="ChEBI" id="CHEBI:15378"/>
        <dbReference type="ChEBI" id="CHEBI:73682"/>
        <dbReference type="ChEBI" id="CHEBI:74411"/>
        <dbReference type="ChEBI" id="CHEBI:74418"/>
        <dbReference type="ChEBI" id="CHEBI:456215"/>
        <dbReference type="EC" id="2.3.1.234"/>
    </reaction>
</comment>
<comment type="cofactor">
    <cofactor evidence="1">
        <name>Fe(2+)</name>
        <dbReference type="ChEBI" id="CHEBI:29033"/>
    </cofactor>
    <text evidence="1">Binds 1 Fe(2+) ion per subunit.</text>
</comment>
<comment type="subcellular location">
    <subcellularLocation>
        <location evidence="1">Cytoplasm</location>
    </subcellularLocation>
</comment>
<comment type="similarity">
    <text evidence="1">Belongs to the KAE1 / TsaD family.</text>
</comment>
<protein>
    <recommendedName>
        <fullName evidence="1">tRNA N6-adenosine threonylcarbamoyltransferase</fullName>
        <ecNumber evidence="1">2.3.1.234</ecNumber>
    </recommendedName>
    <alternativeName>
        <fullName evidence="1">N6-L-threonylcarbamoyladenine synthase</fullName>
        <shortName evidence="1">t(6)A synthase</shortName>
    </alternativeName>
    <alternativeName>
        <fullName evidence="1">t(6)A37 threonylcarbamoyladenosine biosynthesis protein TsaD</fullName>
    </alternativeName>
    <alternativeName>
        <fullName evidence="1">tRNA threonylcarbamoyladenosine biosynthesis protein TsaD</fullName>
    </alternativeName>
</protein>
<sequence length="340" mass="36510">MKESINILAIESSCDETSAAVVVNGREVLSNIIASQISTHEKFGGVVPEVASRKHIEVISAVVQEALDEANFTLDDIDAIGVTYGPGLVGALLVGLQYAKGLAFATGKPLIGVNHIEGHISANFIEYKDLKPPFMCLVVSGGHTFIVYMKDYGEFEVLGETRDDAAGEAFDKVARAIGLGYPGGPKIDKISKEGNEEAIKFPRANFHNDTLDFSFSGIKSAVLNYLNKKEMKGEEINKADVAASFQKSVVDVLVDNTIKACMSKKVDKIAVAGGVASNSCLRETLVRECKKKGIEVLIPPFILCTDNAAMIGSAAYFEYIKGRSTSLDINAVPNLKLGER</sequence>
<gene>
    <name evidence="1" type="primary">tsaD</name>
    <name type="synonym">gcp</name>
    <name type="ordered locus">CLM_3747</name>
</gene>
<dbReference type="EC" id="2.3.1.234" evidence="1"/>
<dbReference type="EMBL" id="CP001581">
    <property type="protein sequence ID" value="ACO83941.1"/>
    <property type="molecule type" value="Genomic_DNA"/>
</dbReference>
<dbReference type="RefSeq" id="WP_012703963.1">
    <property type="nucleotide sequence ID" value="NC_012563.1"/>
</dbReference>
<dbReference type="SMR" id="C1FLX0"/>
<dbReference type="KEGG" id="cby:CLM_3747"/>
<dbReference type="eggNOG" id="COG0533">
    <property type="taxonomic scope" value="Bacteria"/>
</dbReference>
<dbReference type="HOGENOM" id="CLU_023208_0_2_9"/>
<dbReference type="Proteomes" id="UP000001374">
    <property type="component" value="Chromosome"/>
</dbReference>
<dbReference type="GO" id="GO:0005737">
    <property type="term" value="C:cytoplasm"/>
    <property type="evidence" value="ECO:0007669"/>
    <property type="project" value="UniProtKB-SubCell"/>
</dbReference>
<dbReference type="GO" id="GO:0005506">
    <property type="term" value="F:iron ion binding"/>
    <property type="evidence" value="ECO:0007669"/>
    <property type="project" value="UniProtKB-UniRule"/>
</dbReference>
<dbReference type="GO" id="GO:0061711">
    <property type="term" value="F:N(6)-L-threonylcarbamoyladenine synthase activity"/>
    <property type="evidence" value="ECO:0007669"/>
    <property type="project" value="UniProtKB-EC"/>
</dbReference>
<dbReference type="GO" id="GO:0002949">
    <property type="term" value="P:tRNA threonylcarbamoyladenosine modification"/>
    <property type="evidence" value="ECO:0007669"/>
    <property type="project" value="UniProtKB-UniRule"/>
</dbReference>
<dbReference type="CDD" id="cd24133">
    <property type="entry name" value="ASKHA_NBD_TsaD_bac"/>
    <property type="match status" value="1"/>
</dbReference>
<dbReference type="FunFam" id="3.30.420.40:FF:000012">
    <property type="entry name" value="tRNA N6-adenosine threonylcarbamoyltransferase"/>
    <property type="match status" value="1"/>
</dbReference>
<dbReference type="FunFam" id="3.30.420.40:FF:000040">
    <property type="entry name" value="tRNA N6-adenosine threonylcarbamoyltransferase"/>
    <property type="match status" value="1"/>
</dbReference>
<dbReference type="Gene3D" id="3.30.420.40">
    <property type="match status" value="2"/>
</dbReference>
<dbReference type="HAMAP" id="MF_01445">
    <property type="entry name" value="TsaD"/>
    <property type="match status" value="1"/>
</dbReference>
<dbReference type="InterPro" id="IPR043129">
    <property type="entry name" value="ATPase_NBD"/>
</dbReference>
<dbReference type="InterPro" id="IPR000905">
    <property type="entry name" value="Gcp-like_dom"/>
</dbReference>
<dbReference type="InterPro" id="IPR017861">
    <property type="entry name" value="KAE1/TsaD"/>
</dbReference>
<dbReference type="InterPro" id="IPR022450">
    <property type="entry name" value="TsaD"/>
</dbReference>
<dbReference type="NCBIfam" id="TIGR00329">
    <property type="entry name" value="gcp_kae1"/>
    <property type="match status" value="1"/>
</dbReference>
<dbReference type="NCBIfam" id="TIGR03723">
    <property type="entry name" value="T6A_TsaD_YgjD"/>
    <property type="match status" value="1"/>
</dbReference>
<dbReference type="PANTHER" id="PTHR11735">
    <property type="entry name" value="TRNA N6-ADENOSINE THREONYLCARBAMOYLTRANSFERASE"/>
    <property type="match status" value="1"/>
</dbReference>
<dbReference type="PANTHER" id="PTHR11735:SF6">
    <property type="entry name" value="TRNA N6-ADENOSINE THREONYLCARBAMOYLTRANSFERASE, MITOCHONDRIAL"/>
    <property type="match status" value="1"/>
</dbReference>
<dbReference type="Pfam" id="PF00814">
    <property type="entry name" value="TsaD"/>
    <property type="match status" value="1"/>
</dbReference>
<dbReference type="PRINTS" id="PR00789">
    <property type="entry name" value="OSIALOPTASE"/>
</dbReference>
<dbReference type="SUPFAM" id="SSF53067">
    <property type="entry name" value="Actin-like ATPase domain"/>
    <property type="match status" value="2"/>
</dbReference>